<name>Y2336_METCA</name>
<proteinExistence type="inferred from homology"/>
<dbReference type="EMBL" id="AE017282">
    <property type="protein sequence ID" value="AAU91519.1"/>
    <property type="molecule type" value="Genomic_DNA"/>
</dbReference>
<dbReference type="RefSeq" id="WP_010961564.1">
    <property type="nucleotide sequence ID" value="NC_002977.6"/>
</dbReference>
<dbReference type="SMR" id="Q605E8"/>
<dbReference type="STRING" id="243233.MCA2336"/>
<dbReference type="GeneID" id="88224540"/>
<dbReference type="KEGG" id="mca:MCA2336"/>
<dbReference type="eggNOG" id="COG1678">
    <property type="taxonomic scope" value="Bacteria"/>
</dbReference>
<dbReference type="HOGENOM" id="CLU_057596_1_0_6"/>
<dbReference type="Proteomes" id="UP000006821">
    <property type="component" value="Chromosome"/>
</dbReference>
<dbReference type="GO" id="GO:0005829">
    <property type="term" value="C:cytosol"/>
    <property type="evidence" value="ECO:0007669"/>
    <property type="project" value="TreeGrafter"/>
</dbReference>
<dbReference type="Gene3D" id="3.40.1740.10">
    <property type="entry name" value="VC0467-like"/>
    <property type="match status" value="1"/>
</dbReference>
<dbReference type="HAMAP" id="MF_00758">
    <property type="entry name" value="UPF0301"/>
    <property type="match status" value="1"/>
</dbReference>
<dbReference type="InterPro" id="IPR003774">
    <property type="entry name" value="AlgH-like"/>
</dbReference>
<dbReference type="NCBIfam" id="NF001266">
    <property type="entry name" value="PRK00228.1-1"/>
    <property type="match status" value="1"/>
</dbReference>
<dbReference type="PANTHER" id="PTHR30327">
    <property type="entry name" value="UNCHARACTERIZED PROTEIN YQGE"/>
    <property type="match status" value="1"/>
</dbReference>
<dbReference type="PANTHER" id="PTHR30327:SF1">
    <property type="entry name" value="UPF0301 PROTEIN YQGE"/>
    <property type="match status" value="1"/>
</dbReference>
<dbReference type="Pfam" id="PF02622">
    <property type="entry name" value="DUF179"/>
    <property type="match status" value="1"/>
</dbReference>
<dbReference type="SUPFAM" id="SSF143456">
    <property type="entry name" value="VC0467-like"/>
    <property type="match status" value="1"/>
</dbReference>
<gene>
    <name type="ordered locus">MCA2336</name>
</gene>
<protein>
    <recommendedName>
        <fullName evidence="1">UPF0301 protein MCA2336 2</fullName>
    </recommendedName>
</protein>
<organism>
    <name type="scientific">Methylococcus capsulatus (strain ATCC 33009 / NCIMB 11132 / Bath)</name>
    <dbReference type="NCBI Taxonomy" id="243233"/>
    <lineage>
        <taxon>Bacteria</taxon>
        <taxon>Pseudomonadati</taxon>
        <taxon>Pseudomonadota</taxon>
        <taxon>Gammaproteobacteria</taxon>
        <taxon>Methylococcales</taxon>
        <taxon>Methylococcaceae</taxon>
        <taxon>Methylococcus</taxon>
    </lineage>
</organism>
<accession>Q605E8</accession>
<comment type="similarity">
    <text evidence="1">Belongs to the UPF0301 (AlgH) family.</text>
</comment>
<feature type="chain" id="PRO_0000258841" description="UPF0301 protein MCA2336 2">
    <location>
        <begin position="1"/>
        <end position="188"/>
    </location>
</feature>
<keyword id="KW-1185">Reference proteome</keyword>
<sequence>MNSEAEFLANHFLIAMPGLTDPHFAKTVTLVCQHNADGALGIIINRPSELKLSDIMRQMEIDLKVAELGDLPVFFGGPVHPERGFILHEPATVWASTLVVSERLALTTSRDILEAVGRGEGPRRMLLALGYAGWGQGQLEREIIDNSWLNAPSDNAVIFEHPPGRRWKAAADLVGVDISLLTSQAGHG</sequence>
<evidence type="ECO:0000255" key="1">
    <source>
        <dbReference type="HAMAP-Rule" id="MF_00758"/>
    </source>
</evidence>
<reference key="1">
    <citation type="journal article" date="2004" name="PLoS Biol.">
        <title>Genomic insights into methanotrophy: the complete genome sequence of Methylococcus capsulatus (Bath).</title>
        <authorList>
            <person name="Ward N.L."/>
            <person name="Larsen O."/>
            <person name="Sakwa J."/>
            <person name="Bruseth L."/>
            <person name="Khouri H.M."/>
            <person name="Durkin A.S."/>
            <person name="Dimitrov G."/>
            <person name="Jiang L."/>
            <person name="Scanlan D."/>
            <person name="Kang K.H."/>
            <person name="Lewis M.R."/>
            <person name="Nelson K.E."/>
            <person name="Methe B.A."/>
            <person name="Wu M."/>
            <person name="Heidelberg J.F."/>
            <person name="Paulsen I.T."/>
            <person name="Fouts D.E."/>
            <person name="Ravel J."/>
            <person name="Tettelin H."/>
            <person name="Ren Q."/>
            <person name="Read T.D."/>
            <person name="DeBoy R.T."/>
            <person name="Seshadri R."/>
            <person name="Salzberg S.L."/>
            <person name="Jensen H.B."/>
            <person name="Birkeland N.K."/>
            <person name="Nelson W.C."/>
            <person name="Dodson R.J."/>
            <person name="Grindhaug S.H."/>
            <person name="Holt I.E."/>
            <person name="Eidhammer I."/>
            <person name="Jonasen I."/>
            <person name="Vanaken S."/>
            <person name="Utterback T.R."/>
            <person name="Feldblyum T.V."/>
            <person name="Fraser C.M."/>
            <person name="Lillehaug J.R."/>
            <person name="Eisen J.A."/>
        </authorList>
    </citation>
    <scope>NUCLEOTIDE SEQUENCE [LARGE SCALE GENOMIC DNA]</scope>
    <source>
        <strain>ATCC 33009 / NCIMB 11132 / Bath</strain>
    </source>
</reference>